<evidence type="ECO:0000250" key="1">
    <source>
        <dbReference type="UniProtKB" id="C6EVG7"/>
    </source>
</evidence>
<evidence type="ECO:0000250" key="2">
    <source>
        <dbReference type="UniProtKB" id="P83231"/>
    </source>
</evidence>
<evidence type="ECO:0000250" key="3">
    <source>
        <dbReference type="UniProtKB" id="Q3SAE9"/>
    </source>
</evidence>
<evidence type="ECO:0000303" key="4">
    <source>
    </source>
</evidence>
<evidence type="ECO:0000305" key="5"/>
<evidence type="ECO:0000305" key="6">
    <source>
    </source>
</evidence>
<keyword id="KW-1015">Disulfide bond</keyword>
<keyword id="KW-0382">Hypotensive agent</keyword>
<keyword id="KW-0964">Secreted</keyword>
<keyword id="KW-0800">Toxin</keyword>
<keyword id="KW-0838">Vasoactive</keyword>
<keyword id="KW-0840">Vasodilator</keyword>
<accession>Q3SAX8</accession>
<sequence>PAAGLSDPKIGNGCFGFPIDRIGSVSGLGCNRLVQNPPKPISGES</sequence>
<organism>
    <name type="scientific">Oxyuranus scutellatus scutellatus</name>
    <name type="common">Australian taipan</name>
    <name type="synonym">Coastal taipan</name>
    <dbReference type="NCBI Taxonomy" id="8667"/>
    <lineage>
        <taxon>Eukaryota</taxon>
        <taxon>Metazoa</taxon>
        <taxon>Chordata</taxon>
        <taxon>Craniata</taxon>
        <taxon>Vertebrata</taxon>
        <taxon>Euteleostomi</taxon>
        <taxon>Lepidosauria</taxon>
        <taxon>Squamata</taxon>
        <taxon>Bifurcata</taxon>
        <taxon>Unidentata</taxon>
        <taxon>Episquamata</taxon>
        <taxon>Toxicofera</taxon>
        <taxon>Serpentes</taxon>
        <taxon>Colubroidea</taxon>
        <taxon>Elapidae</taxon>
        <taxon>Hydrophiinae</taxon>
        <taxon>Oxyuranus</taxon>
    </lineage>
</organism>
<reference key="1">
    <citation type="journal article" date="2005" name="Cell. Mol. Life Sci.">
        <title>Identification and analysis of venom gland-specific genes from the coastal taipan (Oxyuranus scutellatus) and related species.</title>
        <authorList>
            <person name="St Pierre L."/>
            <person name="Woods R."/>
            <person name="Earl S.T.H."/>
            <person name="Masci P.P."/>
            <person name="Lavin M.F."/>
        </authorList>
    </citation>
    <scope>NUCLEOTIDE SEQUENCE [MRNA]</scope>
    <source>
        <tissue>Venom gland</tissue>
    </source>
</reference>
<comment type="function">
    <text evidence="1 3">Snake venom natriuretic peptide that targets both NPR1 and NPR2 (By similarity). Exhibits hypotensive and vasodepressor activities (By similarity).</text>
</comment>
<comment type="subcellular location">
    <subcellularLocation>
        <location evidence="6">Secreted</location>
    </subcellularLocation>
</comment>
<comment type="tissue specificity">
    <text evidence="6">Expressed by the venom gland.</text>
</comment>
<comment type="similarity">
    <text evidence="5">Belongs to the natriuretic peptide family.</text>
</comment>
<proteinExistence type="evidence at transcript level"/>
<name>VNPD_OXYSC</name>
<dbReference type="EMBL" id="DQ084065">
    <property type="protein sequence ID" value="AAZ39010.1"/>
    <property type="molecule type" value="mRNA"/>
</dbReference>
<dbReference type="SMR" id="Q3SAX8"/>
<dbReference type="GO" id="GO:0005576">
    <property type="term" value="C:extracellular region"/>
    <property type="evidence" value="ECO:0007669"/>
    <property type="project" value="UniProtKB-SubCell"/>
</dbReference>
<dbReference type="GO" id="GO:0005179">
    <property type="term" value="F:hormone activity"/>
    <property type="evidence" value="ECO:0007669"/>
    <property type="project" value="InterPro"/>
</dbReference>
<dbReference type="GO" id="GO:0090729">
    <property type="term" value="F:toxin activity"/>
    <property type="evidence" value="ECO:0007669"/>
    <property type="project" value="UniProtKB-KW"/>
</dbReference>
<dbReference type="GO" id="GO:0008217">
    <property type="term" value="P:regulation of blood pressure"/>
    <property type="evidence" value="ECO:0007669"/>
    <property type="project" value="UniProtKB-KW"/>
</dbReference>
<dbReference type="GO" id="GO:0042311">
    <property type="term" value="P:vasodilation"/>
    <property type="evidence" value="ECO:0007669"/>
    <property type="project" value="UniProtKB-KW"/>
</dbReference>
<dbReference type="InterPro" id="IPR000663">
    <property type="entry name" value="Natr_peptide"/>
</dbReference>
<dbReference type="InterPro" id="IPR030480">
    <property type="entry name" value="Natr_peptide_CS"/>
</dbReference>
<dbReference type="InterPro" id="IPR002408">
    <property type="entry name" value="Natriuretic_peptide_brain"/>
</dbReference>
<dbReference type="Pfam" id="PF00212">
    <property type="entry name" value="ANP"/>
    <property type="match status" value="1"/>
</dbReference>
<dbReference type="PRINTS" id="PR00712">
    <property type="entry name" value="BNATPEPTIDE"/>
</dbReference>
<dbReference type="SMART" id="SM00183">
    <property type="entry name" value="NAT_PEP"/>
    <property type="match status" value="1"/>
</dbReference>
<dbReference type="PROSITE" id="PS00263">
    <property type="entry name" value="NATRIURETIC_PEPTIDE"/>
    <property type="match status" value="1"/>
</dbReference>
<protein>
    <recommendedName>
        <fullName evidence="4">Natriuretic peptide OsNP-d</fullName>
    </recommendedName>
</protein>
<feature type="propeptide" id="PRO_0000342420" evidence="2">
    <location>
        <begin position="1" status="less than"/>
        <end position="5"/>
    </location>
</feature>
<feature type="peptide" id="PRO_5000140337" description="Natriuretic peptide OsNP-d" evidence="2">
    <location>
        <begin position="6"/>
        <end position="45"/>
    </location>
</feature>
<feature type="disulfide bond" evidence="2">
    <location>
        <begin position="14"/>
        <end position="30"/>
    </location>
</feature>
<feature type="non-terminal residue">
    <location>
        <position position="1"/>
    </location>
</feature>